<keyword id="KW-0053">Apoptosis</keyword>
<keyword id="KW-0325">Glycoprotein</keyword>
<keyword id="KW-1032">Host cell membrane</keyword>
<keyword id="KW-1035">Host cytoplasm</keyword>
<keyword id="KW-1040">Host Golgi apparatus</keyword>
<keyword id="KW-1043">Host membrane</keyword>
<keyword id="KW-0407">Ion channel</keyword>
<keyword id="KW-0406">Ion transport</keyword>
<keyword id="KW-0472">Membrane</keyword>
<keyword id="KW-0964">Secreted</keyword>
<keyword id="KW-0812">Transmembrane</keyword>
<keyword id="KW-1133">Transmembrane helix</keyword>
<keyword id="KW-0813">Transport</keyword>
<keyword id="KW-1182">Viral ion channel</keyword>
<keyword id="KW-0946">Virion</keyword>
<reference key="1">
    <citation type="journal article" date="2005" name="Science">
        <title>Bats are natural reservoirs of SARS-like coronaviruses.</title>
        <authorList>
            <person name="Li W."/>
            <person name="Shi Z."/>
            <person name="Yu M."/>
            <person name="Ren W."/>
            <person name="Smith C."/>
            <person name="Epstein J.H."/>
            <person name="Wang H."/>
            <person name="Crameri G."/>
            <person name="Hu Z."/>
            <person name="Zhang H."/>
            <person name="Zhang J."/>
            <person name="McEachern J."/>
            <person name="Field H."/>
            <person name="Daszak P."/>
            <person name="Eaton B.T."/>
            <person name="Zhang S."/>
            <person name="Wang L.F."/>
        </authorList>
    </citation>
    <scope>NUCLEOTIDE SEQUENCE [GENOMIC RNA]</scope>
</reference>
<comment type="function">
    <text evidence="1">Forms homotetrameric potassium sensitive ion channels (viroporin) and may modulate virus release. Up-regulates expression of fibrinogen subunits FGA, FGB and FGG in host lung epithelial cells. Induces apoptosis in cell culture. Down-regulates the type 1 interferon receptor by inducing serine phosphorylation within the IFN alpha-receptor subunit 1 (IFNAR1) degradation motif and increasing IFNAR1 ubiquitination (By similarity).</text>
</comment>
<comment type="subunit">
    <text evidence="1">Homotetramer composed of two homodimers linked non covalently. Interacts with M, S and E proteins. Also interacts with the accessory protein 7a (By similarity).</text>
</comment>
<comment type="subcellular location">
    <subcellularLocation>
        <location evidence="1">Virion</location>
    </subcellularLocation>
    <subcellularLocation>
        <location evidence="1">Host Golgi apparatus membrane</location>
        <topology evidence="1">Multi-pass membrane protein</topology>
    </subcellularLocation>
    <subcellularLocation>
        <location evidence="1">Host cell membrane</location>
        <topology evidence="1">Multi-pass membrane protein</topology>
    </subcellularLocation>
    <subcellularLocation>
        <location evidence="1">Secreted</location>
    </subcellularLocation>
    <subcellularLocation>
        <location evidence="1">Host cytoplasm</location>
    </subcellularLocation>
    <text evidence="1">The cell surface expressed protein can undergo endocytosis. The protein is secreted in association with membranous structures (By similarity).</text>
</comment>
<comment type="domain">
    <text evidence="1">The second or the third transmembrane region are responsible for Golgi localization.</text>
</comment>
<comment type="PTM">
    <text evidence="1">Exists in both O-glycosylated and non-glycosylated forms. The glycosylated form is associated with the virion (By similarity).</text>
</comment>
<comment type="miscellaneous">
    <text>Bat coronavirus rp3 is highly similar to SARS-CoV (SARS-like).</text>
</comment>
<organismHost>
    <name type="scientific">Rhinolophus ferrumequinum</name>
    <name type="common">Greater horseshoe bat</name>
    <dbReference type="NCBI Taxonomy" id="59479"/>
</organismHost>
<organismHost>
    <name type="scientific">Rhinolophus macrotis</name>
    <name type="common">Big-eared horseshoe bat</name>
    <dbReference type="NCBI Taxonomy" id="196889"/>
</organismHost>
<organismHost>
    <name type="scientific">Rhinolophus pearsonii</name>
    <dbReference type="NCBI Taxonomy" id="188571"/>
</organismHost>
<organismHost>
    <name type="scientific">Rhinolophus sinicus</name>
    <name type="common">Chinese rufous horseshoe bat</name>
    <dbReference type="NCBI Taxonomy" id="89399"/>
</organismHost>
<gene>
    <name type="ORF">3</name>
</gene>
<protein>
    <recommendedName>
        <fullName>Protein 3</fullName>
    </recommendedName>
    <alternativeName>
        <fullName>Accessory protein 3</fullName>
    </alternativeName>
</protein>
<feature type="chain" id="PRO_0000106130" description="Protein 3">
    <location>
        <begin position="1"/>
        <end position="274"/>
    </location>
</feature>
<feature type="topological domain" description="Extracellular" evidence="1">
    <location>
        <begin position="1"/>
        <end position="34"/>
    </location>
</feature>
<feature type="transmembrane region" description="Helical" evidence="2">
    <location>
        <begin position="35"/>
        <end position="55"/>
    </location>
</feature>
<feature type="topological domain" description="Cytoplasmic" evidence="2">
    <location>
        <begin position="56"/>
        <end position="78"/>
    </location>
</feature>
<feature type="transmembrane region" description="Helical" evidence="2">
    <location>
        <begin position="79"/>
        <end position="99"/>
    </location>
</feature>
<feature type="topological domain" description="Extracellular" evidence="2">
    <location>
        <begin position="100"/>
        <end position="104"/>
    </location>
</feature>
<feature type="transmembrane region" description="Helical" evidence="2">
    <location>
        <begin position="105"/>
        <end position="125"/>
    </location>
</feature>
<feature type="topological domain" description="Cytoplasmic" evidence="1">
    <location>
        <begin position="126"/>
        <end position="274"/>
    </location>
</feature>
<feature type="domain" description="CoV 3a-like viroporin TM" evidence="3">
    <location>
        <begin position="33"/>
        <end position="141"/>
    </location>
</feature>
<feature type="domain" description="CoV 3a-like viroporin CD" evidence="4">
    <location>
        <begin position="145"/>
        <end position="237"/>
    </location>
</feature>
<feature type="site" description="Involved in polymerization" evidence="1">
    <location>
        <position position="133"/>
    </location>
</feature>
<feature type="glycosylation site" description="O-linked (GalNAc...) serine; by host" evidence="2">
    <location>
        <position position="27"/>
    </location>
</feature>
<feature type="glycosylation site" description="O-linked (GalNAc...) threonine; by host" evidence="1">
    <location>
        <position position="28"/>
    </location>
</feature>
<feature type="glycosylation site" description="O-linked (GalNAc...) threonine; by host" evidence="1">
    <location>
        <position position="32"/>
    </location>
</feature>
<feature type="glycosylation site" description="O-linked (GalNAc...) threonine; by host" evidence="2">
    <location>
        <position position="34"/>
    </location>
</feature>
<dbReference type="EMBL" id="DQ071615">
    <property type="protein sequence ID" value="AAZ67053.1"/>
    <property type="molecule type" value="Genomic_RNA"/>
</dbReference>
<dbReference type="SMR" id="Q3I5J4"/>
<dbReference type="Proteomes" id="UP000006570">
    <property type="component" value="Genome"/>
</dbReference>
<dbReference type="GO" id="GO:0005576">
    <property type="term" value="C:extracellular region"/>
    <property type="evidence" value="ECO:0007669"/>
    <property type="project" value="UniProtKB-SubCell"/>
</dbReference>
<dbReference type="GO" id="GO:0044178">
    <property type="term" value="C:host cell Golgi membrane"/>
    <property type="evidence" value="ECO:0007669"/>
    <property type="project" value="UniProtKB-SubCell"/>
</dbReference>
<dbReference type="GO" id="GO:0020002">
    <property type="term" value="C:host cell plasma membrane"/>
    <property type="evidence" value="ECO:0007669"/>
    <property type="project" value="UniProtKB-SubCell"/>
</dbReference>
<dbReference type="GO" id="GO:0016020">
    <property type="term" value="C:membrane"/>
    <property type="evidence" value="ECO:0007669"/>
    <property type="project" value="UniProtKB-KW"/>
</dbReference>
<dbReference type="GO" id="GO:0044423">
    <property type="term" value="C:virion component"/>
    <property type="evidence" value="ECO:0007669"/>
    <property type="project" value="UniProtKB-KW"/>
</dbReference>
<dbReference type="GO" id="GO:0005216">
    <property type="term" value="F:monoatomic ion channel activity"/>
    <property type="evidence" value="ECO:0007669"/>
    <property type="project" value="InterPro"/>
</dbReference>
<dbReference type="CDD" id="cd21648">
    <property type="entry name" value="SARS-CoV-like_ORF3a"/>
    <property type="match status" value="1"/>
</dbReference>
<dbReference type="InterPro" id="IPR046446">
    <property type="entry name" value="a/bCoV_VIROPORIN_3A-like_CD"/>
</dbReference>
<dbReference type="InterPro" id="IPR046445">
    <property type="entry name" value="a/bCoV_VIROPORIN_3A-like_TM"/>
</dbReference>
<dbReference type="InterPro" id="IPR024407">
    <property type="entry name" value="Protein_3a_bCoV"/>
</dbReference>
<dbReference type="Pfam" id="PF11289">
    <property type="entry name" value="bCoV_viroporin"/>
    <property type="match status" value="1"/>
</dbReference>
<dbReference type="PROSITE" id="PS51967">
    <property type="entry name" value="COV_VIROPORIN_3A_CD"/>
    <property type="match status" value="1"/>
</dbReference>
<dbReference type="PROSITE" id="PS51966">
    <property type="entry name" value="COV_VIROPORIN_3A_TM"/>
    <property type="match status" value="1"/>
</dbReference>
<name>AP3A_BCRP3</name>
<accession>Q3I5J4</accession>
<sequence length="274" mass="30794">MDLFMSIFTLGAITRQPAKIENASPASTVHATATIPLQASLPFGWLVVGVALLAVFQSASKVIALHKRWQLALHKGIQLVCNLLLLFVTIYSHLLLLAAGMEAQFLYIYALIYILQIVSFCRFIMRCWLCWKCRSKNPLLYDANYFVCWHTNCFDYCIPYNSITDTIVLTSGDGTTQPKLKEDYQIGGYSEDWHSGVKDYVVIHGYFTEVYYQLESTQLSTDTGAENATFFIYSKLVKDVDHVQIHTIDGSSGVVNPAMDPIYDEPTTTTSVPL</sequence>
<proteinExistence type="inferred from homology"/>
<evidence type="ECO:0000250" key="1"/>
<evidence type="ECO:0000255" key="2"/>
<evidence type="ECO:0000255" key="3">
    <source>
        <dbReference type="PROSITE-ProRule" id="PRU01311"/>
    </source>
</evidence>
<evidence type="ECO:0000255" key="4">
    <source>
        <dbReference type="PROSITE-ProRule" id="PRU01312"/>
    </source>
</evidence>
<organism>
    <name type="scientific">Bat coronavirus Rp3/2004</name>
    <name type="common">BtCoV/Rp3/2004</name>
    <name type="synonym">SARS-like coronavirus Rp3</name>
    <dbReference type="NCBI Taxonomy" id="349344"/>
    <lineage>
        <taxon>Viruses</taxon>
        <taxon>Riboviria</taxon>
        <taxon>Orthornavirae</taxon>
        <taxon>Pisuviricota</taxon>
        <taxon>Pisoniviricetes</taxon>
        <taxon>Nidovirales</taxon>
        <taxon>Cornidovirineae</taxon>
        <taxon>Coronaviridae</taxon>
        <taxon>Orthocoronavirinae</taxon>
        <taxon>Betacoronavirus</taxon>
        <taxon>Sarbecovirus</taxon>
        <taxon>Severe acute respiratory syndrome coronavirus</taxon>
    </lineage>
</organism>